<feature type="chain" id="PRO_0000364903" description="Ferredoxin--NADP reductase 1">
    <location>
        <begin position="1"/>
        <end position="361"/>
    </location>
</feature>
<feature type="binding site" evidence="1">
    <location>
        <position position="44"/>
    </location>
    <ligand>
        <name>FAD</name>
        <dbReference type="ChEBI" id="CHEBI:57692"/>
    </ligand>
</feature>
<feature type="binding site" evidence="1">
    <location>
        <position position="52"/>
    </location>
    <ligand>
        <name>FAD</name>
        <dbReference type="ChEBI" id="CHEBI:57692"/>
    </ligand>
</feature>
<feature type="binding site" evidence="1">
    <location>
        <position position="57"/>
    </location>
    <ligand>
        <name>FAD</name>
        <dbReference type="ChEBI" id="CHEBI:57692"/>
    </ligand>
</feature>
<feature type="binding site" evidence="1">
    <location>
        <position position="97"/>
    </location>
    <ligand>
        <name>FAD</name>
        <dbReference type="ChEBI" id="CHEBI:57692"/>
    </ligand>
</feature>
<feature type="binding site" evidence="1">
    <location>
        <position position="142"/>
    </location>
    <ligand>
        <name>FAD</name>
        <dbReference type="ChEBI" id="CHEBI:57692"/>
    </ligand>
</feature>
<feature type="binding site" evidence="1">
    <location>
        <position position="308"/>
    </location>
    <ligand>
        <name>FAD</name>
        <dbReference type="ChEBI" id="CHEBI:57692"/>
    </ligand>
</feature>
<feature type="binding site" evidence="1">
    <location>
        <position position="349"/>
    </location>
    <ligand>
        <name>FAD</name>
        <dbReference type="ChEBI" id="CHEBI:57692"/>
    </ligand>
</feature>
<accession>Q0KCD1</accession>
<proteinExistence type="inferred from homology"/>
<gene>
    <name type="ordered locus">H16_A1199</name>
</gene>
<name>FENR1_CUPNH</name>
<reference key="1">
    <citation type="journal article" date="2006" name="Nat. Biotechnol.">
        <title>Genome sequence of the bioplastic-producing 'Knallgas' bacterium Ralstonia eutropha H16.</title>
        <authorList>
            <person name="Pohlmann A."/>
            <person name="Fricke W.F."/>
            <person name="Reinecke F."/>
            <person name="Kusian B."/>
            <person name="Liesegang H."/>
            <person name="Cramm R."/>
            <person name="Eitinger T."/>
            <person name="Ewering C."/>
            <person name="Poetter M."/>
            <person name="Schwartz E."/>
            <person name="Strittmatter A."/>
            <person name="Voss I."/>
            <person name="Gottschalk G."/>
            <person name="Steinbuechel A."/>
            <person name="Friedrich B."/>
            <person name="Bowien B."/>
        </authorList>
    </citation>
    <scope>NUCLEOTIDE SEQUENCE [LARGE SCALE GENOMIC DNA]</scope>
    <source>
        <strain>ATCC 17699 / DSM 428 / KCTC 22496 / NCIMB 10442 / H16 / Stanier 337</strain>
    </source>
</reference>
<evidence type="ECO:0000255" key="1">
    <source>
        <dbReference type="HAMAP-Rule" id="MF_01685"/>
    </source>
</evidence>
<organism>
    <name type="scientific">Cupriavidus necator (strain ATCC 17699 / DSM 428 / KCTC 22496 / NCIMB 10442 / H16 / Stanier 337)</name>
    <name type="common">Ralstonia eutropha</name>
    <dbReference type="NCBI Taxonomy" id="381666"/>
    <lineage>
        <taxon>Bacteria</taxon>
        <taxon>Pseudomonadati</taxon>
        <taxon>Pseudomonadota</taxon>
        <taxon>Betaproteobacteria</taxon>
        <taxon>Burkholderiales</taxon>
        <taxon>Burkholderiaceae</taxon>
        <taxon>Cupriavidus</taxon>
    </lineage>
</organism>
<dbReference type="EC" id="1.18.1.2" evidence="1"/>
<dbReference type="EMBL" id="AM260479">
    <property type="protein sequence ID" value="CAJ92340.1"/>
    <property type="molecule type" value="Genomic_DNA"/>
</dbReference>
<dbReference type="RefSeq" id="WP_010808985.1">
    <property type="nucleotide sequence ID" value="NZ_CP039287.1"/>
</dbReference>
<dbReference type="SMR" id="Q0KCD1"/>
<dbReference type="STRING" id="381666.H16_A1199"/>
<dbReference type="KEGG" id="reh:H16_A1199"/>
<dbReference type="eggNOG" id="COG0492">
    <property type="taxonomic scope" value="Bacteria"/>
</dbReference>
<dbReference type="HOGENOM" id="CLU_031864_5_5_4"/>
<dbReference type="OrthoDB" id="9806179at2"/>
<dbReference type="Proteomes" id="UP000008210">
    <property type="component" value="Chromosome 1"/>
</dbReference>
<dbReference type="GO" id="GO:0004324">
    <property type="term" value="F:ferredoxin-NADP+ reductase activity"/>
    <property type="evidence" value="ECO:0007669"/>
    <property type="project" value="UniProtKB-UniRule"/>
</dbReference>
<dbReference type="GO" id="GO:0050660">
    <property type="term" value="F:flavin adenine dinucleotide binding"/>
    <property type="evidence" value="ECO:0007669"/>
    <property type="project" value="UniProtKB-UniRule"/>
</dbReference>
<dbReference type="GO" id="GO:0050661">
    <property type="term" value="F:NADP binding"/>
    <property type="evidence" value="ECO:0007669"/>
    <property type="project" value="UniProtKB-UniRule"/>
</dbReference>
<dbReference type="Gene3D" id="3.50.50.60">
    <property type="entry name" value="FAD/NAD(P)-binding domain"/>
    <property type="match status" value="2"/>
</dbReference>
<dbReference type="HAMAP" id="MF_01685">
    <property type="entry name" value="FENR2"/>
    <property type="match status" value="1"/>
</dbReference>
<dbReference type="InterPro" id="IPR036188">
    <property type="entry name" value="FAD/NAD-bd_sf"/>
</dbReference>
<dbReference type="InterPro" id="IPR023753">
    <property type="entry name" value="FAD/NAD-binding_dom"/>
</dbReference>
<dbReference type="InterPro" id="IPR022890">
    <property type="entry name" value="Fd--NADP_Rdtase_type_2"/>
</dbReference>
<dbReference type="InterPro" id="IPR050097">
    <property type="entry name" value="Ferredoxin-NADP_redctase_2"/>
</dbReference>
<dbReference type="PANTHER" id="PTHR48105">
    <property type="entry name" value="THIOREDOXIN REDUCTASE 1-RELATED-RELATED"/>
    <property type="match status" value="1"/>
</dbReference>
<dbReference type="Pfam" id="PF07992">
    <property type="entry name" value="Pyr_redox_2"/>
    <property type="match status" value="1"/>
</dbReference>
<dbReference type="PRINTS" id="PR00368">
    <property type="entry name" value="FADPNR"/>
</dbReference>
<dbReference type="PRINTS" id="PR00469">
    <property type="entry name" value="PNDRDTASEII"/>
</dbReference>
<dbReference type="SUPFAM" id="SSF51905">
    <property type="entry name" value="FAD/NAD(P)-binding domain"/>
    <property type="match status" value="1"/>
</dbReference>
<protein>
    <recommendedName>
        <fullName evidence="1">Ferredoxin--NADP reductase 1</fullName>
        <shortName evidence="1">FNR 1</shortName>
        <shortName evidence="1">Fd-NADP(+) reductase 1</shortName>
        <ecNumber evidence="1">1.18.1.2</ecNumber>
    </recommendedName>
</protein>
<keyword id="KW-0274">FAD</keyword>
<keyword id="KW-0285">Flavoprotein</keyword>
<keyword id="KW-0521">NADP</keyword>
<keyword id="KW-0560">Oxidoreductase</keyword>
<keyword id="KW-1185">Reference proteome</keyword>
<comment type="catalytic activity">
    <reaction evidence="1">
        <text>2 reduced [2Fe-2S]-[ferredoxin] + NADP(+) + H(+) = 2 oxidized [2Fe-2S]-[ferredoxin] + NADPH</text>
        <dbReference type="Rhea" id="RHEA:20125"/>
        <dbReference type="Rhea" id="RHEA-COMP:10000"/>
        <dbReference type="Rhea" id="RHEA-COMP:10001"/>
        <dbReference type="ChEBI" id="CHEBI:15378"/>
        <dbReference type="ChEBI" id="CHEBI:33737"/>
        <dbReference type="ChEBI" id="CHEBI:33738"/>
        <dbReference type="ChEBI" id="CHEBI:57783"/>
        <dbReference type="ChEBI" id="CHEBI:58349"/>
        <dbReference type="EC" id="1.18.1.2"/>
    </reaction>
</comment>
<comment type="cofactor">
    <cofactor evidence="1">
        <name>FAD</name>
        <dbReference type="ChEBI" id="CHEBI:57692"/>
    </cofactor>
    <text evidence="1">Binds 1 FAD per subunit.</text>
</comment>
<comment type="subunit">
    <text evidence="1">Homodimer.</text>
</comment>
<comment type="similarity">
    <text evidence="1">Belongs to the ferredoxin--NADP reductase type 2 family.</text>
</comment>
<sequence length="361" mass="38628">MSTATPLAPTPVTTTDVLIVGAGPVGLFAAFQAGVLGLRCELIDVLDRAGGQCTELYPEKPIYDIPAVPGCLAQDLVDRLLEQCAPFAFPMHFGQRAESLSEIPRQPAPDGHAAHERLLVTTDGGKRFDVSAVLICAGAGAFAPQRVSLPEAPALEGRHVHYAVRDVSRFAGKRVVVAGGGDSALDWALALRKVAARVTLLHRREGFRAADGTVAEMREAVAAGEMDFVVGMLGALRTEGQDGPLTEVEVRTRDGSTVLPADELVALYGLVSEPGPIAQWDMDMRAGRILVDTTTYESSRRGIFAAGDIAYYTNKQKLILSGFHEAALALRRAYHYAFPEKALVHVHTSNNAALKEKLTHA</sequence>